<sequence length="498" mass="54756">MIESNMLVLTLVIPVITAILLVFIGKRPIIKRYVALGGTLLTLVAAIINLANVVKHGPIRVELGSWKAPYSIVFVLDIFSALLIITSIIITAIVILYSYQTIGIERERYYYYFSVLFMLIGIIGAFTTGDIFNLFVFFEVFLMSSYFLLVIGSTKIQLQETIKYVLVNVVSSSFFVMGVAILYSVVGTLNLADISNKLANLSAHDSGLVNIVFILFIFVFATKAGVFPMFVWLPSAYYAPPIPIIAFFGALLTKVGVYAIARTLSLFFSDNVSFSHYVILFLALLTIIFGCVGAVAYANIKKIILYNVMIAVGVILVGVAMMTESGMIGAIYYTLHDMLVKLALFLLIGIMIKITGTADLRQFGGLIKRYPVLGWSFFIAALSLAGIPPLSGFYGKFFIVQSTFERGFYLSGVIVLLSSLVVLYSVIRIFLQGFFGQPKGYDLNNKVDVKYLTTIAIVAVVITVLYGLSADYLYPMVKAGAETFYNPSTYVKAVLGGK</sequence>
<reference key="1">
    <citation type="journal article" date="2001" name="Lancet">
        <title>Whole genome sequencing of meticillin-resistant Staphylococcus aureus.</title>
        <authorList>
            <person name="Kuroda M."/>
            <person name="Ohta T."/>
            <person name="Uchiyama I."/>
            <person name="Baba T."/>
            <person name="Yuzawa H."/>
            <person name="Kobayashi I."/>
            <person name="Cui L."/>
            <person name="Oguchi A."/>
            <person name="Aoki K."/>
            <person name="Nagai Y."/>
            <person name="Lian J.-Q."/>
            <person name="Ito T."/>
            <person name="Kanamori M."/>
            <person name="Matsumaru H."/>
            <person name="Maruyama A."/>
            <person name="Murakami H."/>
            <person name="Hosoyama A."/>
            <person name="Mizutani-Ui Y."/>
            <person name="Takahashi N.K."/>
            <person name="Sawano T."/>
            <person name="Inoue R."/>
            <person name="Kaito C."/>
            <person name="Sekimizu K."/>
            <person name="Hirakawa H."/>
            <person name="Kuhara S."/>
            <person name="Goto S."/>
            <person name="Yabuzaki J."/>
            <person name="Kanehisa M."/>
            <person name="Yamashita A."/>
            <person name="Oshima K."/>
            <person name="Furuya K."/>
            <person name="Yoshino C."/>
            <person name="Shiba T."/>
            <person name="Hattori M."/>
            <person name="Ogasawara N."/>
            <person name="Hayashi H."/>
            <person name="Hiramatsu K."/>
        </authorList>
    </citation>
    <scope>NUCLEOTIDE SEQUENCE [LARGE SCALE GENOMIC DNA]</scope>
    <source>
        <strain>N315</strain>
    </source>
</reference>
<feature type="chain" id="PRO_0000217078" description="Na(+)/H(+) antiporter subunit D1">
    <location>
        <begin position="1"/>
        <end position="498"/>
    </location>
</feature>
<feature type="transmembrane region" description="Helical" evidence="2">
    <location>
        <begin position="6"/>
        <end position="25"/>
    </location>
</feature>
<feature type="transmembrane region" description="Helical" evidence="2">
    <location>
        <begin position="32"/>
        <end position="54"/>
    </location>
</feature>
<feature type="transmembrane region" description="Helical" evidence="2">
    <location>
        <begin position="74"/>
        <end position="96"/>
    </location>
</feature>
<feature type="transmembrane region" description="Helical" evidence="2">
    <location>
        <begin position="109"/>
        <end position="126"/>
    </location>
</feature>
<feature type="transmembrane region" description="Helical" evidence="2">
    <location>
        <begin position="131"/>
        <end position="153"/>
    </location>
</feature>
<feature type="transmembrane region" description="Helical" evidence="2">
    <location>
        <begin position="165"/>
        <end position="187"/>
    </location>
</feature>
<feature type="transmembrane region" description="Helical" evidence="2">
    <location>
        <begin position="211"/>
        <end position="233"/>
    </location>
</feature>
<feature type="transmembrane region" description="Helical" evidence="2">
    <location>
        <begin position="238"/>
        <end position="260"/>
    </location>
</feature>
<feature type="transmembrane region" description="Helical" evidence="2">
    <location>
        <begin position="275"/>
        <end position="297"/>
    </location>
</feature>
<feature type="transmembrane region" description="Helical" evidence="2">
    <location>
        <begin position="304"/>
        <end position="323"/>
    </location>
</feature>
<feature type="transmembrane region" description="Helical" evidence="2">
    <location>
        <begin position="328"/>
        <end position="350"/>
    </location>
</feature>
<feature type="transmembrane region" description="Helical" evidence="2">
    <location>
        <begin position="371"/>
        <end position="393"/>
    </location>
</feature>
<feature type="transmembrane region" description="Helical" evidence="2">
    <location>
        <begin position="408"/>
        <end position="430"/>
    </location>
</feature>
<feature type="transmembrane region" description="Helical" evidence="2">
    <location>
        <begin position="451"/>
        <end position="470"/>
    </location>
</feature>
<accession>P60685</accession>
<accession>Q9ZNG3</accession>
<comment type="function">
    <text evidence="1">Mnh complex is a Na(+)/H(+) antiporter involved in Na(+) excretion.</text>
</comment>
<comment type="subunit">
    <text evidence="1">May form a heterooligomeric complex that consists of seven subunits: mnhA1, mnhB1, mnhC1, mnhD1, mnhE1, mnhF1 and mnhG1.</text>
</comment>
<comment type="subcellular location">
    <subcellularLocation>
        <location evidence="3">Cell membrane</location>
        <topology evidence="3">Multi-pass membrane protein</topology>
    </subcellularLocation>
</comment>
<comment type="similarity">
    <text evidence="3">Belongs to the CPA3 antiporters (TC 2.A.63) subunit D family.</text>
</comment>
<keyword id="KW-0050">Antiport</keyword>
<keyword id="KW-1003">Cell membrane</keyword>
<keyword id="KW-0375">Hydrogen ion transport</keyword>
<keyword id="KW-0406">Ion transport</keyword>
<keyword id="KW-0472">Membrane</keyword>
<keyword id="KW-0915">Sodium</keyword>
<keyword id="KW-0739">Sodium transport</keyword>
<keyword id="KW-0812">Transmembrane</keyword>
<keyword id="KW-1133">Transmembrane helix</keyword>
<keyword id="KW-0813">Transport</keyword>
<gene>
    <name type="primary">mnhD1</name>
    <name type="ordered locus">SA0810</name>
</gene>
<proteinExistence type="inferred from homology"/>
<name>MNHD1_STAAN</name>
<dbReference type="EMBL" id="BA000018">
    <property type="protein sequence ID" value="BAB42049.1"/>
    <property type="molecule type" value="Genomic_DNA"/>
</dbReference>
<dbReference type="PIR" id="F89861">
    <property type="entry name" value="F89861"/>
</dbReference>
<dbReference type="RefSeq" id="WP_000573077.1">
    <property type="nucleotide sequence ID" value="NC_002745.2"/>
</dbReference>
<dbReference type="SMR" id="P60685"/>
<dbReference type="EnsemblBacteria" id="BAB42049">
    <property type="protein sequence ID" value="BAB42049"/>
    <property type="gene ID" value="BAB42049"/>
</dbReference>
<dbReference type="KEGG" id="sau:SA0810"/>
<dbReference type="HOGENOM" id="CLU_007100_9_2_9"/>
<dbReference type="GO" id="GO:0005886">
    <property type="term" value="C:plasma membrane"/>
    <property type="evidence" value="ECO:0007669"/>
    <property type="project" value="UniProtKB-SubCell"/>
</dbReference>
<dbReference type="GO" id="GO:0008137">
    <property type="term" value="F:NADH dehydrogenase (ubiquinone) activity"/>
    <property type="evidence" value="ECO:0007669"/>
    <property type="project" value="InterPro"/>
</dbReference>
<dbReference type="GO" id="GO:0015386">
    <property type="term" value="F:potassium:proton antiporter activity"/>
    <property type="evidence" value="ECO:0007669"/>
    <property type="project" value="InterPro"/>
</dbReference>
<dbReference type="GO" id="GO:0042773">
    <property type="term" value="P:ATP synthesis coupled electron transport"/>
    <property type="evidence" value="ECO:0007669"/>
    <property type="project" value="InterPro"/>
</dbReference>
<dbReference type="GO" id="GO:0006814">
    <property type="term" value="P:sodium ion transport"/>
    <property type="evidence" value="ECO:0007669"/>
    <property type="project" value="UniProtKB-KW"/>
</dbReference>
<dbReference type="InterPro" id="IPR050586">
    <property type="entry name" value="CPA3_Na-H_Antiporter_D"/>
</dbReference>
<dbReference type="InterPro" id="IPR004775">
    <property type="entry name" value="MnhD1"/>
</dbReference>
<dbReference type="InterPro" id="IPR003918">
    <property type="entry name" value="NADH_UbQ_OxRdtase"/>
</dbReference>
<dbReference type="InterPro" id="IPR001750">
    <property type="entry name" value="ND/Mrp_TM"/>
</dbReference>
<dbReference type="NCBIfam" id="TIGR00944">
    <property type="entry name" value="2a6301s04"/>
    <property type="match status" value="1"/>
</dbReference>
<dbReference type="NCBIfam" id="NF005818">
    <property type="entry name" value="PRK07691.1"/>
    <property type="match status" value="1"/>
</dbReference>
<dbReference type="PANTHER" id="PTHR42703:SF1">
    <property type="entry name" value="NA(+)_H(+) ANTIPORTER SUBUNIT D1"/>
    <property type="match status" value="1"/>
</dbReference>
<dbReference type="PANTHER" id="PTHR42703">
    <property type="entry name" value="NADH DEHYDROGENASE"/>
    <property type="match status" value="1"/>
</dbReference>
<dbReference type="Pfam" id="PF00361">
    <property type="entry name" value="Proton_antipo_M"/>
    <property type="match status" value="1"/>
</dbReference>
<dbReference type="PRINTS" id="PR01437">
    <property type="entry name" value="NUOXDRDTASE4"/>
</dbReference>
<evidence type="ECO:0000250" key="1"/>
<evidence type="ECO:0000255" key="2"/>
<evidence type="ECO:0000305" key="3"/>
<protein>
    <recommendedName>
        <fullName>Na(+)/H(+) antiporter subunit D1</fullName>
    </recommendedName>
    <alternativeName>
        <fullName>Mnh complex subunit D1</fullName>
    </alternativeName>
</protein>
<organism>
    <name type="scientific">Staphylococcus aureus (strain N315)</name>
    <dbReference type="NCBI Taxonomy" id="158879"/>
    <lineage>
        <taxon>Bacteria</taxon>
        <taxon>Bacillati</taxon>
        <taxon>Bacillota</taxon>
        <taxon>Bacilli</taxon>
        <taxon>Bacillales</taxon>
        <taxon>Staphylococcaceae</taxon>
        <taxon>Staphylococcus</taxon>
    </lineage>
</organism>